<organism>
    <name type="scientific">Candida albicans (strain SC5314 / ATCC MYA-2876)</name>
    <name type="common">Yeast</name>
    <dbReference type="NCBI Taxonomy" id="237561"/>
    <lineage>
        <taxon>Eukaryota</taxon>
        <taxon>Fungi</taxon>
        <taxon>Dikarya</taxon>
        <taxon>Ascomycota</taxon>
        <taxon>Saccharomycotina</taxon>
        <taxon>Pichiomycetes</taxon>
        <taxon>Debaryomycetaceae</taxon>
        <taxon>Candida/Lodderomyces clade</taxon>
        <taxon>Candida</taxon>
    </lineage>
</organism>
<dbReference type="EMBL" id="CP017630">
    <property type="protein sequence ID" value="AOW31696.1"/>
    <property type="status" value="ALT_INIT"/>
    <property type="molecule type" value="Genomic_DNA"/>
</dbReference>
<dbReference type="RefSeq" id="XP_719385.1">
    <property type="nucleotide sequence ID" value="XM_714292.1"/>
</dbReference>
<dbReference type="SMR" id="Q5ACL9"/>
<dbReference type="FunCoup" id="Q5ACL9">
    <property type="interactions" value="978"/>
</dbReference>
<dbReference type="STRING" id="237561.Q5ACL9"/>
<dbReference type="GeneID" id="3638979"/>
<dbReference type="KEGG" id="cal:CAALFM_CR10470CA"/>
<dbReference type="eggNOG" id="KOG2773">
    <property type="taxonomic scope" value="Eukaryota"/>
</dbReference>
<dbReference type="HOGENOM" id="CLU_018299_2_2_1"/>
<dbReference type="InParanoid" id="Q5ACL9"/>
<dbReference type="OrthoDB" id="5783963at2759"/>
<dbReference type="Proteomes" id="UP000000559">
    <property type="component" value="Chromosome R"/>
</dbReference>
<dbReference type="GO" id="GO:0005730">
    <property type="term" value="C:nucleolus"/>
    <property type="evidence" value="ECO:0000318"/>
    <property type="project" value="GO_Central"/>
</dbReference>
<dbReference type="GO" id="GO:0000462">
    <property type="term" value="P:maturation of SSU-rRNA from tricistronic rRNA transcript (SSU-rRNA, 5.8S rRNA, LSU-rRNA)"/>
    <property type="evidence" value="ECO:0000318"/>
    <property type="project" value="GO_Central"/>
</dbReference>
<dbReference type="InterPro" id="IPR025160">
    <property type="entry name" value="AATF"/>
</dbReference>
<dbReference type="InterPro" id="IPR039223">
    <property type="entry name" value="AATF/Bfr2"/>
</dbReference>
<dbReference type="InterPro" id="IPR012617">
    <property type="entry name" value="AATF_C"/>
</dbReference>
<dbReference type="PANTHER" id="PTHR15565">
    <property type="entry name" value="AATF PROTEIN APOPTOSIS ANTAGONIZING TRANSCRIPTION FACTOR"/>
    <property type="match status" value="1"/>
</dbReference>
<dbReference type="PANTHER" id="PTHR15565:SF0">
    <property type="entry name" value="PROTEIN AATF"/>
    <property type="match status" value="1"/>
</dbReference>
<dbReference type="Pfam" id="PF13339">
    <property type="entry name" value="AATF-Che1"/>
    <property type="match status" value="1"/>
</dbReference>
<dbReference type="Pfam" id="PF08164">
    <property type="entry name" value="TRAUB"/>
    <property type="match status" value="1"/>
</dbReference>
<evidence type="ECO:0000250" key="1"/>
<evidence type="ECO:0000256" key="2">
    <source>
        <dbReference type="SAM" id="MobiDB-lite"/>
    </source>
</evidence>
<evidence type="ECO:0000305" key="3"/>
<name>BFR2_CANAL</name>
<accession>Q5ACL9</accession>
<accession>A0A1D8PU86</accession>
<protein>
    <recommendedName>
        <fullName>Protein BFR2</fullName>
    </recommendedName>
</protein>
<proteinExistence type="inferred from homology"/>
<comment type="subcellular location">
    <subcellularLocation>
        <location evidence="1">Nucleus</location>
        <location evidence="1">Nucleolus</location>
    </subcellularLocation>
</comment>
<comment type="similarity">
    <text evidence="3">Belongs to the AATF family.</text>
</comment>
<comment type="sequence caution" evidence="3">
    <conflict type="erroneous initiation">
        <sequence resource="EMBL-CDS" id="AOW31696"/>
    </conflict>
    <text>Extended N-terminus.</text>
</comment>
<sequence length="512" mass="58463">MAKKSLSEQISSLYTPKTDYDIEDHDLDVSKDNGIFQHHDGGSENESEDEDTGLRNEHYVESSKSKLRQQNEGVNLGEKYVGNVTSRSKLYDDEDDKQPTEASSGEELDAESAEEEEDEESEDVADDDEDDQESDRSSSSDAENDEDENISHKRELLKQLMSKERSHIVNRLSQSATNDALKGYSIQQQNKTFEKIIDVRLKFQKSVTSSNMLPINTSTYSETKSEDSDELVTKAKKQLYSLLDHLFTLRNELDESTSVKTPKKRSFAKYSEVTSAADAQLNSRRNQILTKWSAKVANSSGRNAMNANKFKTINQSFEQQVNNNLSDMDRLIKRTKLNRRNVTPIGYTTKEEDDHENGNKNKSIDEDDDDIPEDTSVRKKTQGLENDYIFDDEDFYRVLLNDLVDKKVQTSDPTSGITISLRAAQKSNKLKNNVDTKASKGRKLRYHVQEPIANFETSRGSWRWNDDQIDEFFASLLGQKVNMNEIDDEQEEEQENDDNDIIPEDNGIQLFG</sequence>
<feature type="chain" id="PRO_0000056623" description="Protein BFR2">
    <location>
        <begin position="1"/>
        <end position="512"/>
    </location>
</feature>
<feature type="region of interest" description="Disordered" evidence="2">
    <location>
        <begin position="1"/>
        <end position="151"/>
    </location>
</feature>
<feature type="region of interest" description="Disordered" evidence="2">
    <location>
        <begin position="342"/>
        <end position="378"/>
    </location>
</feature>
<feature type="region of interest" description="Disordered" evidence="2">
    <location>
        <begin position="488"/>
        <end position="512"/>
    </location>
</feature>
<feature type="compositionally biased region" description="Basic and acidic residues" evidence="2">
    <location>
        <begin position="27"/>
        <end position="42"/>
    </location>
</feature>
<feature type="compositionally biased region" description="Basic and acidic residues" evidence="2">
    <location>
        <begin position="52"/>
        <end position="64"/>
    </location>
</feature>
<feature type="compositionally biased region" description="Acidic residues" evidence="2">
    <location>
        <begin position="104"/>
        <end position="133"/>
    </location>
</feature>
<feature type="compositionally biased region" description="Basic and acidic residues" evidence="2">
    <location>
        <begin position="349"/>
        <end position="364"/>
    </location>
</feature>
<feature type="compositionally biased region" description="Acidic residues" evidence="2">
    <location>
        <begin position="488"/>
        <end position="503"/>
    </location>
</feature>
<gene>
    <name type="primary">BFR2</name>
    <name type="ordered locus">CAALFM_CR10470CA</name>
    <name type="ORF">CaO19.7624</name>
</gene>
<keyword id="KW-0539">Nucleus</keyword>
<keyword id="KW-1185">Reference proteome</keyword>
<reference key="1">
    <citation type="journal article" date="2004" name="Proc. Natl. Acad. Sci. U.S.A.">
        <title>The diploid genome sequence of Candida albicans.</title>
        <authorList>
            <person name="Jones T."/>
            <person name="Federspiel N.A."/>
            <person name="Chibana H."/>
            <person name="Dungan J."/>
            <person name="Kalman S."/>
            <person name="Magee B.B."/>
            <person name="Newport G."/>
            <person name="Thorstenson Y.R."/>
            <person name="Agabian N."/>
            <person name="Magee P.T."/>
            <person name="Davis R.W."/>
            <person name="Scherer S."/>
        </authorList>
    </citation>
    <scope>NUCLEOTIDE SEQUENCE [LARGE SCALE GENOMIC DNA]</scope>
    <source>
        <strain>SC5314 / ATCC MYA-2876</strain>
    </source>
</reference>
<reference key="2">
    <citation type="journal article" date="2007" name="Genome Biol.">
        <title>Assembly of the Candida albicans genome into sixteen supercontigs aligned on the eight chromosomes.</title>
        <authorList>
            <person name="van het Hoog M."/>
            <person name="Rast T.J."/>
            <person name="Martchenko M."/>
            <person name="Grindle S."/>
            <person name="Dignard D."/>
            <person name="Hogues H."/>
            <person name="Cuomo C."/>
            <person name="Berriman M."/>
            <person name="Scherer S."/>
            <person name="Magee B.B."/>
            <person name="Whiteway M."/>
            <person name="Chibana H."/>
            <person name="Nantel A."/>
            <person name="Magee P.T."/>
        </authorList>
    </citation>
    <scope>GENOME REANNOTATION</scope>
    <source>
        <strain>SC5314 / ATCC MYA-2876</strain>
    </source>
</reference>
<reference key="3">
    <citation type="journal article" date="2013" name="Genome Biol.">
        <title>Assembly of a phased diploid Candida albicans genome facilitates allele-specific measurements and provides a simple model for repeat and indel structure.</title>
        <authorList>
            <person name="Muzzey D."/>
            <person name="Schwartz K."/>
            <person name="Weissman J.S."/>
            <person name="Sherlock G."/>
        </authorList>
    </citation>
    <scope>NUCLEOTIDE SEQUENCE [LARGE SCALE GENOMIC DNA]</scope>
    <scope>GENOME REANNOTATION</scope>
    <source>
        <strain>SC5314 / ATCC MYA-2876</strain>
    </source>
</reference>